<keyword id="KW-0112">Calmodulin-binding</keyword>
<keyword id="KW-0114">cAMP</keyword>
<keyword id="KW-0116">cAMP-binding</keyword>
<keyword id="KW-1003">Cell membrane</keyword>
<keyword id="KW-0140">cGMP</keyword>
<keyword id="KW-0142">cGMP-binding</keyword>
<keyword id="KW-0407">Ion channel</keyword>
<keyword id="KW-0406">Ion transport</keyword>
<keyword id="KW-1071">Ligand-gated ion channel</keyword>
<keyword id="KW-0472">Membrane</keyword>
<keyword id="KW-0547">Nucleotide-binding</keyword>
<keyword id="KW-1185">Reference proteome</keyword>
<keyword id="KW-0812">Transmembrane</keyword>
<keyword id="KW-1133">Transmembrane helix</keyword>
<keyword id="KW-0813">Transport</keyword>
<comment type="function">
    <text>Putative cyclic nucleotide-gated ion channel.</text>
</comment>
<comment type="subunit">
    <text evidence="5">Homotetramer or heterotetramer.</text>
</comment>
<comment type="subcellular location">
    <subcellularLocation>
        <location evidence="5">Cell membrane</location>
        <topology evidence="5">Multi-pass membrane protein</topology>
    </subcellularLocation>
</comment>
<comment type="domain">
    <text evidence="1">The binding of calmodulin to the C-terminus might interfere with cyclic nucleotide binding and thus channel activation.</text>
</comment>
<comment type="similarity">
    <text evidence="5">Belongs to the cyclic nucleotide-gated cation channel (TC 1.A.1.5) family.</text>
</comment>
<comment type="sequence caution" evidence="5">
    <conflict type="erroneous gene model prediction">
        <sequence resource="EMBL-CDS" id="AAG12561"/>
    </conflict>
</comment>
<reference key="1">
    <citation type="journal article" date="2000" name="Nature">
        <title>Sequence and analysis of chromosome 1 of the plant Arabidopsis thaliana.</title>
        <authorList>
            <person name="Theologis A."/>
            <person name="Ecker J.R."/>
            <person name="Palm C.J."/>
            <person name="Federspiel N.A."/>
            <person name="Kaul S."/>
            <person name="White O."/>
            <person name="Alonso J."/>
            <person name="Altafi H."/>
            <person name="Araujo R."/>
            <person name="Bowman C.L."/>
            <person name="Brooks S.Y."/>
            <person name="Buehler E."/>
            <person name="Chan A."/>
            <person name="Chao Q."/>
            <person name="Chen H."/>
            <person name="Cheuk R.F."/>
            <person name="Chin C.W."/>
            <person name="Chung M.K."/>
            <person name="Conn L."/>
            <person name="Conway A.B."/>
            <person name="Conway A.R."/>
            <person name="Creasy T.H."/>
            <person name="Dewar K."/>
            <person name="Dunn P."/>
            <person name="Etgu P."/>
            <person name="Feldblyum T.V."/>
            <person name="Feng J.-D."/>
            <person name="Fong B."/>
            <person name="Fujii C.Y."/>
            <person name="Gill J.E."/>
            <person name="Goldsmith A.D."/>
            <person name="Haas B."/>
            <person name="Hansen N.F."/>
            <person name="Hughes B."/>
            <person name="Huizar L."/>
            <person name="Hunter J.L."/>
            <person name="Jenkins J."/>
            <person name="Johnson-Hopson C."/>
            <person name="Khan S."/>
            <person name="Khaykin E."/>
            <person name="Kim C.J."/>
            <person name="Koo H.L."/>
            <person name="Kremenetskaia I."/>
            <person name="Kurtz D.B."/>
            <person name="Kwan A."/>
            <person name="Lam B."/>
            <person name="Langin-Hooper S."/>
            <person name="Lee A."/>
            <person name="Lee J.M."/>
            <person name="Lenz C.A."/>
            <person name="Li J.H."/>
            <person name="Li Y.-P."/>
            <person name="Lin X."/>
            <person name="Liu S.X."/>
            <person name="Liu Z.A."/>
            <person name="Luros J.S."/>
            <person name="Maiti R."/>
            <person name="Marziali A."/>
            <person name="Militscher J."/>
            <person name="Miranda M."/>
            <person name="Nguyen M."/>
            <person name="Nierman W.C."/>
            <person name="Osborne B.I."/>
            <person name="Pai G."/>
            <person name="Peterson J."/>
            <person name="Pham P.K."/>
            <person name="Rizzo M."/>
            <person name="Rooney T."/>
            <person name="Rowley D."/>
            <person name="Sakano H."/>
            <person name="Salzberg S.L."/>
            <person name="Schwartz J.R."/>
            <person name="Shinn P."/>
            <person name="Southwick A.M."/>
            <person name="Sun H."/>
            <person name="Tallon L.J."/>
            <person name="Tambunga G."/>
            <person name="Toriumi M.J."/>
            <person name="Town C.D."/>
            <person name="Utterback T."/>
            <person name="Van Aken S."/>
            <person name="Vaysberg M."/>
            <person name="Vysotskaia V.S."/>
            <person name="Walker M."/>
            <person name="Wu D."/>
            <person name="Yu G."/>
            <person name="Fraser C.M."/>
            <person name="Venter J.C."/>
            <person name="Davis R.W."/>
        </authorList>
    </citation>
    <scope>NUCLEOTIDE SEQUENCE [LARGE SCALE GENOMIC DNA]</scope>
    <source>
        <strain>cv. Columbia</strain>
    </source>
</reference>
<reference key="2">
    <citation type="journal article" date="2017" name="Plant J.">
        <title>Araport11: a complete reannotation of the Arabidopsis thaliana reference genome.</title>
        <authorList>
            <person name="Cheng C.Y."/>
            <person name="Krishnakumar V."/>
            <person name="Chan A.P."/>
            <person name="Thibaud-Nissen F."/>
            <person name="Schobel S."/>
            <person name="Town C.D."/>
        </authorList>
    </citation>
    <scope>GENOME REANNOTATION</scope>
    <source>
        <strain>cv. Columbia</strain>
    </source>
</reference>
<reference key="3">
    <citation type="journal article" date="2001" name="Plant Physiol.">
        <title>Phylogenetic relationships within cation transporter families of Arabidopsis.</title>
        <authorList>
            <person name="Maeser P."/>
            <person name="Thomine S."/>
            <person name="Schroeder J.I."/>
            <person name="Ward J.M."/>
            <person name="Hirschi K."/>
            <person name="Sze H."/>
            <person name="Talke I.N."/>
            <person name="Amtmann A."/>
            <person name="Maathuis F.J.M."/>
            <person name="Sanders D."/>
            <person name="Harper J.F."/>
            <person name="Tchieu J."/>
            <person name="Gribskov M."/>
            <person name="Persans M.W."/>
            <person name="Salt D.E."/>
            <person name="Kim S.A."/>
            <person name="Guerinot M.L."/>
        </authorList>
    </citation>
    <scope>GENE FAMILY</scope>
    <scope>NOMENCLATURE</scope>
</reference>
<organism>
    <name type="scientific">Arabidopsis thaliana</name>
    <name type="common">Mouse-ear cress</name>
    <dbReference type="NCBI Taxonomy" id="3702"/>
    <lineage>
        <taxon>Eukaryota</taxon>
        <taxon>Viridiplantae</taxon>
        <taxon>Streptophyta</taxon>
        <taxon>Embryophyta</taxon>
        <taxon>Tracheophyta</taxon>
        <taxon>Spermatophyta</taxon>
        <taxon>Magnoliopsida</taxon>
        <taxon>eudicotyledons</taxon>
        <taxon>Gunneridae</taxon>
        <taxon>Pentapetalae</taxon>
        <taxon>rosids</taxon>
        <taxon>malvids</taxon>
        <taxon>Brassicales</taxon>
        <taxon>Brassicaceae</taxon>
        <taxon>Camelineae</taxon>
        <taxon>Arabidopsis</taxon>
    </lineage>
</organism>
<name>CNGC8_ARATH</name>
<feature type="chain" id="PRO_0000219336" description="Putative cyclic nucleotide-gated ion channel 8">
    <location>
        <begin position="1"/>
        <end position="753"/>
    </location>
</feature>
<feature type="topological domain" description="Cytoplasmic" evidence="2">
    <location>
        <begin position="1"/>
        <end position="111"/>
    </location>
</feature>
<feature type="transmembrane region" description="Helical; Name=H1" evidence="2">
    <location>
        <begin position="112"/>
        <end position="132"/>
    </location>
</feature>
<feature type="topological domain" description="Extracellular" evidence="2">
    <location>
        <begin position="133"/>
        <end position="145"/>
    </location>
</feature>
<feature type="transmembrane region" description="Helical; Name=H2" evidence="2">
    <location>
        <begin position="146"/>
        <end position="166"/>
    </location>
</feature>
<feature type="topological domain" description="Cytoplasmic" evidence="2">
    <location>
        <begin position="167"/>
        <end position="199"/>
    </location>
</feature>
<feature type="transmembrane region" description="Helical; Name=H3" evidence="2">
    <location>
        <begin position="200"/>
        <end position="220"/>
    </location>
</feature>
<feature type="topological domain" description="Extracellular" evidence="2">
    <location>
        <begin position="221"/>
        <end position="233"/>
    </location>
</feature>
<feature type="transmembrane region" description="Helical; Name=H4" evidence="2">
    <location>
        <begin position="234"/>
        <end position="254"/>
    </location>
</feature>
<feature type="topological domain" description="Cytoplasmic" evidence="2">
    <location>
        <begin position="255"/>
        <end position="274"/>
    </location>
</feature>
<feature type="transmembrane region" description="Helical; Name=H5" evidence="2">
    <location>
        <begin position="275"/>
        <end position="295"/>
    </location>
</feature>
<feature type="topological domain" description="Extracellular" evidence="2">
    <location>
        <begin position="296"/>
        <end position="402"/>
    </location>
</feature>
<feature type="transmembrane region" description="Helical; Name=H6" evidence="2">
    <location>
        <begin position="403"/>
        <end position="423"/>
    </location>
</feature>
<feature type="topological domain" description="Cytoplasmic" evidence="2">
    <location>
        <begin position="424"/>
        <end position="753"/>
    </location>
</feature>
<feature type="domain" description="IQ" evidence="3">
    <location>
        <begin position="644"/>
        <end position="673"/>
    </location>
</feature>
<feature type="region of interest" description="Calmodulin-binding" evidence="1">
    <location>
        <begin position="624"/>
        <end position="639"/>
    </location>
</feature>
<feature type="region of interest" description="Disordered" evidence="4">
    <location>
        <begin position="731"/>
        <end position="753"/>
    </location>
</feature>
<feature type="compositionally biased region" description="Acidic residues" evidence="4">
    <location>
        <begin position="742"/>
        <end position="753"/>
    </location>
</feature>
<feature type="binding site">
    <location>
        <begin position="508"/>
        <end position="638"/>
    </location>
    <ligand>
        <name>a nucleoside 3',5'-cyclic phosphate</name>
        <dbReference type="ChEBI" id="CHEBI:58464"/>
    </ligand>
</feature>
<feature type="binding site" evidence="1">
    <location>
        <position position="579"/>
    </location>
    <ligand>
        <name>a nucleoside 3',5'-cyclic phosphate</name>
        <dbReference type="ChEBI" id="CHEBI:58464"/>
    </ligand>
</feature>
<protein>
    <recommendedName>
        <fullName>Putative cyclic nucleotide-gated ion channel 8</fullName>
    </recommendedName>
    <alternativeName>
        <fullName>Cyclic nucleotide- and calmodulin-regulated ion channel 8</fullName>
    </alternativeName>
</protein>
<proteinExistence type="inferred from homology"/>
<evidence type="ECO:0000250" key="1"/>
<evidence type="ECO:0000255" key="2"/>
<evidence type="ECO:0000255" key="3">
    <source>
        <dbReference type="PROSITE-ProRule" id="PRU00116"/>
    </source>
</evidence>
<evidence type="ECO:0000256" key="4">
    <source>
        <dbReference type="SAM" id="MobiDB-lite"/>
    </source>
</evidence>
<evidence type="ECO:0000305" key="5"/>
<accession>Q9FXH6</accession>
<dbReference type="EMBL" id="AC007797">
    <property type="protein sequence ID" value="AAG12561.1"/>
    <property type="status" value="ALT_SEQ"/>
    <property type="molecule type" value="Genomic_DNA"/>
</dbReference>
<dbReference type="EMBL" id="AC024609">
    <property type="status" value="NOT_ANNOTATED_CDS"/>
    <property type="molecule type" value="Genomic_DNA"/>
</dbReference>
<dbReference type="EMBL" id="CP002684">
    <property type="protein sequence ID" value="AEE29896.1"/>
    <property type="molecule type" value="Genomic_DNA"/>
</dbReference>
<dbReference type="PIR" id="H86330">
    <property type="entry name" value="H86330"/>
</dbReference>
<dbReference type="RefSeq" id="NP_173408.2">
    <property type="nucleotide sequence ID" value="NM_101834.4"/>
</dbReference>
<dbReference type="SMR" id="Q9FXH6"/>
<dbReference type="FunCoup" id="Q9FXH6">
    <property type="interactions" value="202"/>
</dbReference>
<dbReference type="STRING" id="3702.Q9FXH6"/>
<dbReference type="iPTMnet" id="Q9FXH6"/>
<dbReference type="PaxDb" id="3702-AT1G19780.1"/>
<dbReference type="ProteomicsDB" id="220483"/>
<dbReference type="EnsemblPlants" id="AT1G19780.1">
    <property type="protein sequence ID" value="AT1G19780.1"/>
    <property type="gene ID" value="AT1G19780"/>
</dbReference>
<dbReference type="GeneID" id="838566"/>
<dbReference type="Gramene" id="AT1G19780.1">
    <property type="protein sequence ID" value="AT1G19780.1"/>
    <property type="gene ID" value="AT1G19780"/>
</dbReference>
<dbReference type="KEGG" id="ath:AT1G19780"/>
<dbReference type="Araport" id="AT1G19780"/>
<dbReference type="TAIR" id="AT1G19780">
    <property type="gene designation" value="CNGC8"/>
</dbReference>
<dbReference type="eggNOG" id="KOG0498">
    <property type="taxonomic scope" value="Eukaryota"/>
</dbReference>
<dbReference type="HOGENOM" id="CLU_013069_3_0_1"/>
<dbReference type="InParanoid" id="Q9FXH6"/>
<dbReference type="OMA" id="RMFVISC"/>
<dbReference type="PhylomeDB" id="Q9FXH6"/>
<dbReference type="PRO" id="PR:Q9FXH6"/>
<dbReference type="Proteomes" id="UP000006548">
    <property type="component" value="Chromosome 1"/>
</dbReference>
<dbReference type="ExpressionAtlas" id="Q9FXH6">
    <property type="expression patterns" value="baseline and differential"/>
</dbReference>
<dbReference type="GO" id="GO:0005886">
    <property type="term" value="C:plasma membrane"/>
    <property type="evidence" value="ECO:0007669"/>
    <property type="project" value="UniProtKB-SubCell"/>
</dbReference>
<dbReference type="GO" id="GO:0005516">
    <property type="term" value="F:calmodulin binding"/>
    <property type="evidence" value="ECO:0007669"/>
    <property type="project" value="UniProtKB-KW"/>
</dbReference>
<dbReference type="GO" id="GO:0030552">
    <property type="term" value="F:cAMP binding"/>
    <property type="evidence" value="ECO:0007669"/>
    <property type="project" value="UniProtKB-KW"/>
</dbReference>
<dbReference type="GO" id="GO:0030553">
    <property type="term" value="F:cGMP binding"/>
    <property type="evidence" value="ECO:0007669"/>
    <property type="project" value="UniProtKB-KW"/>
</dbReference>
<dbReference type="GO" id="GO:0005216">
    <property type="term" value="F:monoatomic ion channel activity"/>
    <property type="evidence" value="ECO:0007669"/>
    <property type="project" value="InterPro"/>
</dbReference>
<dbReference type="GO" id="GO:0009860">
    <property type="term" value="P:pollen tube growth"/>
    <property type="evidence" value="ECO:0000316"/>
    <property type="project" value="TAIR"/>
</dbReference>
<dbReference type="CDD" id="cd00038">
    <property type="entry name" value="CAP_ED"/>
    <property type="match status" value="1"/>
</dbReference>
<dbReference type="FunFam" id="1.10.287.630:FF:000003">
    <property type="entry name" value="Cyclic nucleotide-gated ion channel 1"/>
    <property type="match status" value="1"/>
</dbReference>
<dbReference type="FunFam" id="2.60.120.10:FF:000024">
    <property type="entry name" value="Cyclic nucleotide-gated ion channel 1"/>
    <property type="match status" value="1"/>
</dbReference>
<dbReference type="Gene3D" id="1.10.287.70">
    <property type="match status" value="1"/>
</dbReference>
<dbReference type="Gene3D" id="1.10.287.630">
    <property type="entry name" value="Helix hairpin bin"/>
    <property type="match status" value="1"/>
</dbReference>
<dbReference type="Gene3D" id="2.60.120.10">
    <property type="entry name" value="Jelly Rolls"/>
    <property type="match status" value="1"/>
</dbReference>
<dbReference type="InterPro" id="IPR000595">
    <property type="entry name" value="cNMP-bd_dom"/>
</dbReference>
<dbReference type="InterPro" id="IPR018490">
    <property type="entry name" value="cNMP-bd_dom_sf"/>
</dbReference>
<dbReference type="InterPro" id="IPR005821">
    <property type="entry name" value="Ion_trans_dom"/>
</dbReference>
<dbReference type="InterPro" id="IPR014710">
    <property type="entry name" value="RmlC-like_jellyroll"/>
</dbReference>
<dbReference type="PANTHER" id="PTHR45651">
    <property type="entry name" value="CYCLIC NUCLEOTIDE-GATED ION CHANNEL 15-RELATED-RELATED"/>
    <property type="match status" value="1"/>
</dbReference>
<dbReference type="PANTHER" id="PTHR45651:SF115">
    <property type="entry name" value="CYCLIC NUCLEOTIDE-GATED ION CHANNEL 7-RELATED"/>
    <property type="match status" value="1"/>
</dbReference>
<dbReference type="Pfam" id="PF00027">
    <property type="entry name" value="cNMP_binding"/>
    <property type="match status" value="1"/>
</dbReference>
<dbReference type="Pfam" id="PF00520">
    <property type="entry name" value="Ion_trans"/>
    <property type="match status" value="1"/>
</dbReference>
<dbReference type="SMART" id="SM00100">
    <property type="entry name" value="cNMP"/>
    <property type="match status" value="1"/>
</dbReference>
<dbReference type="SUPFAM" id="SSF51206">
    <property type="entry name" value="cAMP-binding domain-like"/>
    <property type="match status" value="1"/>
</dbReference>
<dbReference type="SUPFAM" id="SSF81324">
    <property type="entry name" value="Voltage-gated potassium channels"/>
    <property type="match status" value="1"/>
</dbReference>
<dbReference type="PROSITE" id="PS50042">
    <property type="entry name" value="CNMP_BINDING_3"/>
    <property type="match status" value="1"/>
</dbReference>
<dbReference type="PROSITE" id="PS50096">
    <property type="entry name" value="IQ"/>
    <property type="match status" value="1"/>
</dbReference>
<sequence length="753" mass="85983">MYKSQYISGHREKFVRLDDTDSRVSMSSNATGMKKRSCFGLFNVTSRGGGKTKNTSKSFREGVKIGSEGLKTIGKSFTSGVTRAVFPEDLRVSEKKIFDPQDKTLLLWNRMFVISCILAVSVDPLFFYLPIVDNSKNCIGIDSKLAVTTTTLRTIIDVFYLTRMALQFRTAYIAPSSRVFGRGELVIDPAKIAERYLTRYFIVDFLAVLPLPQIAVWKFLHGSKGTDVLPTKQALLHIVITQYIPRFVRFIPLTSELKKTAGAFAEGAWAGAAYYLLWYMLASHITGAFWYMLSVERNDTCLRSACKVQPDPKVCVQILYCGSKLMSSRETDWIKSVPDLFKNNCSAKSDESKFNYGIYSQAVSSGIVSSTTFFSKFCYCLWWGLQNLSTLGQGLQTSTYPGEVLFSIAIAVAGLLLFALLIGNMQTYLQSLTVRLEEMRIKRRDSEQWMHHRSLPQNLRERVRRYDQYKWLETRGVDEENIVQSLPKDLRRDIKRHLCLNLVRRVPLFANMDERLLDAICERLKPSLYTESTYIVREGDPVNEMLFIIRGRLESVTTDGGRSGFFNRGLLKEGDFCGEELLTWALDPKAGSNLPSSTRTVKALTEVEAFALEAEELKFVASQFRRLHSRQVQQTFRFYSQQWRTWAACFIQAAWRRHLRRKIAELRRKEEEEEEMDYEDDEYYDDNMGGMVTRSDSSVGSSSTLRSTVFASRFAANALKGHKLRVTESSKSLMNLTKPSEPDFEALDTDDLN</sequence>
<gene>
    <name type="primary">CNGC8</name>
    <name type="ordered locus">At1g19780</name>
    <name type="ORF">F14P1.12</name>
    <name type="ORF">F6F9.17</name>
</gene>